<comment type="function">
    <text evidence="1">DNA-dependent RNA polymerase catalyzes the transcription of DNA into RNA using the four ribonucleoside triphosphates as substrates.</text>
</comment>
<comment type="catalytic activity">
    <reaction evidence="1">
        <text>RNA(n) + a ribonucleoside 5'-triphosphate = RNA(n+1) + diphosphate</text>
        <dbReference type="Rhea" id="RHEA:21248"/>
        <dbReference type="Rhea" id="RHEA-COMP:14527"/>
        <dbReference type="Rhea" id="RHEA-COMP:17342"/>
        <dbReference type="ChEBI" id="CHEBI:33019"/>
        <dbReference type="ChEBI" id="CHEBI:61557"/>
        <dbReference type="ChEBI" id="CHEBI:140395"/>
        <dbReference type="EC" id="2.7.7.6"/>
    </reaction>
</comment>
<comment type="subunit">
    <text evidence="1">Homodimer. The RNAP catalytic core consists of 2 alpha, 1 beta, 1 beta' and 1 omega subunit. When a sigma factor is associated with the core the holoenzyme is formed, which can initiate transcription.</text>
</comment>
<comment type="domain">
    <text evidence="1">The N-terminal domain is essential for RNAP assembly and basal transcription, whereas the C-terminal domain is involved in interaction with transcriptional regulators and with upstream promoter elements.</text>
</comment>
<comment type="similarity">
    <text evidence="1">Belongs to the RNA polymerase alpha chain family.</text>
</comment>
<dbReference type="EC" id="2.7.7.6" evidence="1"/>
<dbReference type="EMBL" id="BX294155">
    <property type="protein sequence ID" value="CAD77689.1"/>
    <property type="molecule type" value="Genomic_DNA"/>
</dbReference>
<dbReference type="RefSeq" id="NP_870612.1">
    <property type="nucleotide sequence ID" value="NC_005027.1"/>
</dbReference>
<dbReference type="RefSeq" id="WP_007328400.1">
    <property type="nucleotide sequence ID" value="NC_005027.1"/>
</dbReference>
<dbReference type="SMR" id="Q7UIC5"/>
<dbReference type="FunCoup" id="Q7UIC5">
    <property type="interactions" value="467"/>
</dbReference>
<dbReference type="STRING" id="243090.RB12626"/>
<dbReference type="EnsemblBacteria" id="CAD77689">
    <property type="protein sequence ID" value="CAD77689"/>
    <property type="gene ID" value="RB12626"/>
</dbReference>
<dbReference type="KEGG" id="rba:RB12626"/>
<dbReference type="PATRIC" id="fig|243090.15.peg.6123"/>
<dbReference type="eggNOG" id="COG0202">
    <property type="taxonomic scope" value="Bacteria"/>
</dbReference>
<dbReference type="HOGENOM" id="CLU_053084_0_1_0"/>
<dbReference type="InParanoid" id="Q7UIC5"/>
<dbReference type="OrthoDB" id="9805706at2"/>
<dbReference type="Proteomes" id="UP000001025">
    <property type="component" value="Chromosome"/>
</dbReference>
<dbReference type="GO" id="GO:0005737">
    <property type="term" value="C:cytoplasm"/>
    <property type="evidence" value="ECO:0000318"/>
    <property type="project" value="GO_Central"/>
</dbReference>
<dbReference type="GO" id="GO:0000428">
    <property type="term" value="C:DNA-directed RNA polymerase complex"/>
    <property type="evidence" value="ECO:0007669"/>
    <property type="project" value="UniProtKB-KW"/>
</dbReference>
<dbReference type="GO" id="GO:0003677">
    <property type="term" value="F:DNA binding"/>
    <property type="evidence" value="ECO:0007669"/>
    <property type="project" value="UniProtKB-UniRule"/>
</dbReference>
<dbReference type="GO" id="GO:0003899">
    <property type="term" value="F:DNA-directed RNA polymerase activity"/>
    <property type="evidence" value="ECO:0007669"/>
    <property type="project" value="UniProtKB-UniRule"/>
</dbReference>
<dbReference type="GO" id="GO:0046983">
    <property type="term" value="F:protein dimerization activity"/>
    <property type="evidence" value="ECO:0007669"/>
    <property type="project" value="InterPro"/>
</dbReference>
<dbReference type="GO" id="GO:0006351">
    <property type="term" value="P:DNA-templated transcription"/>
    <property type="evidence" value="ECO:0007669"/>
    <property type="project" value="UniProtKB-UniRule"/>
</dbReference>
<dbReference type="CDD" id="cd06928">
    <property type="entry name" value="RNAP_alpha_NTD"/>
    <property type="match status" value="1"/>
</dbReference>
<dbReference type="FunFam" id="1.10.150.20:FF:000121">
    <property type="entry name" value="DNA-directed RNA polymerase subunit alpha"/>
    <property type="match status" value="1"/>
</dbReference>
<dbReference type="FunFam" id="2.170.120.12:FF:000001">
    <property type="entry name" value="DNA-directed RNA polymerase subunit alpha"/>
    <property type="match status" value="1"/>
</dbReference>
<dbReference type="Gene3D" id="1.10.150.20">
    <property type="entry name" value="5' to 3' exonuclease, C-terminal subdomain"/>
    <property type="match status" value="1"/>
</dbReference>
<dbReference type="Gene3D" id="2.170.120.12">
    <property type="entry name" value="DNA-directed RNA polymerase, insert domain"/>
    <property type="match status" value="1"/>
</dbReference>
<dbReference type="Gene3D" id="3.30.1360.10">
    <property type="entry name" value="RNA polymerase, RBP11-like subunit"/>
    <property type="match status" value="1"/>
</dbReference>
<dbReference type="HAMAP" id="MF_00059">
    <property type="entry name" value="RNApol_bact_RpoA"/>
    <property type="match status" value="1"/>
</dbReference>
<dbReference type="InterPro" id="IPR011262">
    <property type="entry name" value="DNA-dir_RNA_pol_insert"/>
</dbReference>
<dbReference type="InterPro" id="IPR011263">
    <property type="entry name" value="DNA-dir_RNA_pol_RpoA/D/Rpb3"/>
</dbReference>
<dbReference type="InterPro" id="IPR011773">
    <property type="entry name" value="DNA-dir_RpoA"/>
</dbReference>
<dbReference type="InterPro" id="IPR036603">
    <property type="entry name" value="RBP11-like"/>
</dbReference>
<dbReference type="InterPro" id="IPR011260">
    <property type="entry name" value="RNAP_asu_C"/>
</dbReference>
<dbReference type="InterPro" id="IPR036643">
    <property type="entry name" value="RNApol_insert_sf"/>
</dbReference>
<dbReference type="NCBIfam" id="NF003513">
    <property type="entry name" value="PRK05182.1-2"/>
    <property type="match status" value="1"/>
</dbReference>
<dbReference type="NCBIfam" id="NF003519">
    <property type="entry name" value="PRK05182.2-5"/>
    <property type="match status" value="1"/>
</dbReference>
<dbReference type="NCBIfam" id="TIGR02027">
    <property type="entry name" value="rpoA"/>
    <property type="match status" value="1"/>
</dbReference>
<dbReference type="Pfam" id="PF01000">
    <property type="entry name" value="RNA_pol_A_bac"/>
    <property type="match status" value="1"/>
</dbReference>
<dbReference type="Pfam" id="PF03118">
    <property type="entry name" value="RNA_pol_A_CTD"/>
    <property type="match status" value="1"/>
</dbReference>
<dbReference type="Pfam" id="PF01193">
    <property type="entry name" value="RNA_pol_L"/>
    <property type="match status" value="1"/>
</dbReference>
<dbReference type="SMART" id="SM00662">
    <property type="entry name" value="RPOLD"/>
    <property type="match status" value="1"/>
</dbReference>
<dbReference type="SUPFAM" id="SSF47789">
    <property type="entry name" value="C-terminal domain of RNA polymerase alpha subunit"/>
    <property type="match status" value="1"/>
</dbReference>
<dbReference type="SUPFAM" id="SSF56553">
    <property type="entry name" value="Insert subdomain of RNA polymerase alpha subunit"/>
    <property type="match status" value="1"/>
</dbReference>
<dbReference type="SUPFAM" id="SSF55257">
    <property type="entry name" value="RBP11-like subunits of RNA polymerase"/>
    <property type="match status" value="1"/>
</dbReference>
<protein>
    <recommendedName>
        <fullName evidence="1">DNA-directed RNA polymerase subunit alpha</fullName>
        <shortName evidence="1">RNAP subunit alpha</shortName>
        <ecNumber evidence="1">2.7.7.6</ecNumber>
    </recommendedName>
    <alternativeName>
        <fullName evidence="1">RNA polymerase subunit alpha</fullName>
    </alternativeName>
    <alternativeName>
        <fullName evidence="1">Transcriptase subunit alpha</fullName>
    </alternativeName>
</protein>
<gene>
    <name evidence="1" type="primary">rpoA</name>
    <name type="ordered locus">RB12626</name>
</gene>
<evidence type="ECO:0000255" key="1">
    <source>
        <dbReference type="HAMAP-Rule" id="MF_00059"/>
    </source>
</evidence>
<keyword id="KW-0240">DNA-directed RNA polymerase</keyword>
<keyword id="KW-0548">Nucleotidyltransferase</keyword>
<keyword id="KW-1185">Reference proteome</keyword>
<keyword id="KW-0804">Transcription</keyword>
<keyword id="KW-0808">Transferase</keyword>
<proteinExistence type="inferred from homology"/>
<feature type="chain" id="PRO_0000175366" description="DNA-directed RNA polymerase subunit alpha">
    <location>
        <begin position="1"/>
        <end position="331"/>
    </location>
</feature>
<feature type="region of interest" description="Alpha N-terminal domain (alpha-NTD)" evidence="1">
    <location>
        <begin position="1"/>
        <end position="235"/>
    </location>
</feature>
<feature type="region of interest" description="Alpha C-terminal domain (alpha-CTD)" evidence="1">
    <location>
        <begin position="255"/>
        <end position="331"/>
    </location>
</feature>
<accession>Q7UIC5</accession>
<sequence>MTMHIRWRGMELPSSLEVDRDSLTQTYGKFSAEPFERGFGASIGNSMRRVLLSSLVGSAVTQIKIRGAQHEFTTIPGVLEDVTDIVLNVKSLIVNSNTDSTRVITVERNTAGVVTGADVQTDADVEIINKDHVICTLTDDVPFMMEMVVETGRGYVPSTEHSSVDHEIGIIPIDAVFSPIVRVRYEVEATRVGQKTNYDRLNLEIWTDGTINPEMALTEAAKILRKHLNPFVQYRELGPSIFSAARGGAGSPEAQLEAKLNMTLADLRLSVRANNCLESENIMTVRDLVQRTEDSLLEVRNFGDTTLNEVREKLSQYGLHLGMRVPNQPLF</sequence>
<reference key="1">
    <citation type="journal article" date="2003" name="Proc. Natl. Acad. Sci. U.S.A.">
        <title>Complete genome sequence of the marine planctomycete Pirellula sp. strain 1.</title>
        <authorList>
            <person name="Gloeckner F.O."/>
            <person name="Kube M."/>
            <person name="Bauer M."/>
            <person name="Teeling H."/>
            <person name="Lombardot T."/>
            <person name="Ludwig W."/>
            <person name="Gade D."/>
            <person name="Beck A."/>
            <person name="Borzym K."/>
            <person name="Heitmann K."/>
            <person name="Rabus R."/>
            <person name="Schlesner H."/>
            <person name="Amann R."/>
            <person name="Reinhardt R."/>
        </authorList>
    </citation>
    <scope>NUCLEOTIDE SEQUENCE [LARGE SCALE GENOMIC DNA]</scope>
    <source>
        <strain>DSM 10527 / NCIMB 13988 / SH1</strain>
    </source>
</reference>
<name>RPOA_RHOBA</name>
<organism>
    <name type="scientific">Rhodopirellula baltica (strain DSM 10527 / NCIMB 13988 / SH1)</name>
    <dbReference type="NCBI Taxonomy" id="243090"/>
    <lineage>
        <taxon>Bacteria</taxon>
        <taxon>Pseudomonadati</taxon>
        <taxon>Planctomycetota</taxon>
        <taxon>Planctomycetia</taxon>
        <taxon>Pirellulales</taxon>
        <taxon>Pirellulaceae</taxon>
        <taxon>Rhodopirellula</taxon>
    </lineage>
</organism>